<reference key="1">
    <citation type="journal article" date="2008" name="Genome Res.">
        <title>Comparative genome analysis of Salmonella enteritidis PT4 and Salmonella gallinarum 287/91 provides insights into evolutionary and host adaptation pathways.</title>
        <authorList>
            <person name="Thomson N.R."/>
            <person name="Clayton D.J."/>
            <person name="Windhorst D."/>
            <person name="Vernikos G."/>
            <person name="Davidson S."/>
            <person name="Churcher C."/>
            <person name="Quail M.A."/>
            <person name="Stevens M."/>
            <person name="Jones M.A."/>
            <person name="Watson M."/>
            <person name="Barron A."/>
            <person name="Layton A."/>
            <person name="Pickard D."/>
            <person name="Kingsley R.A."/>
            <person name="Bignell A."/>
            <person name="Clark L."/>
            <person name="Harris B."/>
            <person name="Ormond D."/>
            <person name="Abdellah Z."/>
            <person name="Brooks K."/>
            <person name="Cherevach I."/>
            <person name="Chillingworth T."/>
            <person name="Woodward J."/>
            <person name="Norberczak H."/>
            <person name="Lord A."/>
            <person name="Arrowsmith C."/>
            <person name="Jagels K."/>
            <person name="Moule S."/>
            <person name="Mungall K."/>
            <person name="Saunders M."/>
            <person name="Whitehead S."/>
            <person name="Chabalgoity J.A."/>
            <person name="Maskell D."/>
            <person name="Humphreys T."/>
            <person name="Roberts M."/>
            <person name="Barrow P.A."/>
            <person name="Dougan G."/>
            <person name="Parkhill J."/>
        </authorList>
    </citation>
    <scope>NUCLEOTIDE SEQUENCE [LARGE SCALE GENOMIC DNA]</scope>
    <source>
        <strain>P125109</strain>
    </source>
</reference>
<feature type="chain" id="PRO_1000143296" description="Small ribosomal subunit protein uS17">
    <location>
        <begin position="1"/>
        <end position="84"/>
    </location>
</feature>
<comment type="function">
    <text evidence="1">One of the primary rRNA binding proteins, it binds specifically to the 5'-end of 16S ribosomal RNA.</text>
</comment>
<comment type="subunit">
    <text evidence="1">Part of the 30S ribosomal subunit.</text>
</comment>
<comment type="similarity">
    <text evidence="1">Belongs to the universal ribosomal protein uS17 family.</text>
</comment>
<gene>
    <name evidence="1" type="primary">rpsQ</name>
    <name type="ordered locus">SEN3259</name>
</gene>
<name>RS17_SALEP</name>
<keyword id="KW-0687">Ribonucleoprotein</keyword>
<keyword id="KW-0689">Ribosomal protein</keyword>
<keyword id="KW-0694">RNA-binding</keyword>
<keyword id="KW-0699">rRNA-binding</keyword>
<dbReference type="EMBL" id="AM933172">
    <property type="protein sequence ID" value="CAR34834.1"/>
    <property type="molecule type" value="Genomic_DNA"/>
</dbReference>
<dbReference type="RefSeq" id="WP_000130101.1">
    <property type="nucleotide sequence ID" value="NC_011294.1"/>
</dbReference>
<dbReference type="SMR" id="B5R282"/>
<dbReference type="GeneID" id="66757766"/>
<dbReference type="KEGG" id="set:SEN3259"/>
<dbReference type="HOGENOM" id="CLU_073626_1_1_6"/>
<dbReference type="Proteomes" id="UP000000613">
    <property type="component" value="Chromosome"/>
</dbReference>
<dbReference type="GO" id="GO:0022627">
    <property type="term" value="C:cytosolic small ribosomal subunit"/>
    <property type="evidence" value="ECO:0007669"/>
    <property type="project" value="TreeGrafter"/>
</dbReference>
<dbReference type="GO" id="GO:0019843">
    <property type="term" value="F:rRNA binding"/>
    <property type="evidence" value="ECO:0007669"/>
    <property type="project" value="UniProtKB-UniRule"/>
</dbReference>
<dbReference type="GO" id="GO:0003735">
    <property type="term" value="F:structural constituent of ribosome"/>
    <property type="evidence" value="ECO:0007669"/>
    <property type="project" value="InterPro"/>
</dbReference>
<dbReference type="GO" id="GO:0006412">
    <property type="term" value="P:translation"/>
    <property type="evidence" value="ECO:0007669"/>
    <property type="project" value="UniProtKB-UniRule"/>
</dbReference>
<dbReference type="CDD" id="cd00364">
    <property type="entry name" value="Ribosomal_uS17"/>
    <property type="match status" value="1"/>
</dbReference>
<dbReference type="FunFam" id="2.40.50.140:FF:000014">
    <property type="entry name" value="30S ribosomal protein S17"/>
    <property type="match status" value="1"/>
</dbReference>
<dbReference type="Gene3D" id="2.40.50.140">
    <property type="entry name" value="Nucleic acid-binding proteins"/>
    <property type="match status" value="1"/>
</dbReference>
<dbReference type="HAMAP" id="MF_01345_B">
    <property type="entry name" value="Ribosomal_uS17_B"/>
    <property type="match status" value="1"/>
</dbReference>
<dbReference type="InterPro" id="IPR012340">
    <property type="entry name" value="NA-bd_OB-fold"/>
</dbReference>
<dbReference type="InterPro" id="IPR000266">
    <property type="entry name" value="Ribosomal_uS17"/>
</dbReference>
<dbReference type="InterPro" id="IPR019984">
    <property type="entry name" value="Ribosomal_uS17_bact/chlr"/>
</dbReference>
<dbReference type="InterPro" id="IPR019979">
    <property type="entry name" value="Ribosomal_uS17_CS"/>
</dbReference>
<dbReference type="NCBIfam" id="NF004123">
    <property type="entry name" value="PRK05610.1"/>
    <property type="match status" value="1"/>
</dbReference>
<dbReference type="NCBIfam" id="TIGR03635">
    <property type="entry name" value="uS17_bact"/>
    <property type="match status" value="1"/>
</dbReference>
<dbReference type="PANTHER" id="PTHR10744">
    <property type="entry name" value="40S RIBOSOMAL PROTEIN S11 FAMILY MEMBER"/>
    <property type="match status" value="1"/>
</dbReference>
<dbReference type="PANTHER" id="PTHR10744:SF1">
    <property type="entry name" value="SMALL RIBOSOMAL SUBUNIT PROTEIN US17M"/>
    <property type="match status" value="1"/>
</dbReference>
<dbReference type="Pfam" id="PF00366">
    <property type="entry name" value="Ribosomal_S17"/>
    <property type="match status" value="1"/>
</dbReference>
<dbReference type="PRINTS" id="PR00973">
    <property type="entry name" value="RIBOSOMALS17"/>
</dbReference>
<dbReference type="SUPFAM" id="SSF50249">
    <property type="entry name" value="Nucleic acid-binding proteins"/>
    <property type="match status" value="1"/>
</dbReference>
<dbReference type="PROSITE" id="PS00056">
    <property type="entry name" value="RIBOSOMAL_S17"/>
    <property type="match status" value="1"/>
</dbReference>
<sequence>MTDKIRTLQGRVVSDKMEKSIVVAIERFVKHPIYGKFIKRTTKMHVHDENNECGIGDVVEIRECRPLSKTKSWTLVRVVEKAVL</sequence>
<evidence type="ECO:0000255" key="1">
    <source>
        <dbReference type="HAMAP-Rule" id="MF_01345"/>
    </source>
</evidence>
<evidence type="ECO:0000305" key="2"/>
<proteinExistence type="inferred from homology"/>
<organism>
    <name type="scientific">Salmonella enteritidis PT4 (strain P125109)</name>
    <dbReference type="NCBI Taxonomy" id="550537"/>
    <lineage>
        <taxon>Bacteria</taxon>
        <taxon>Pseudomonadati</taxon>
        <taxon>Pseudomonadota</taxon>
        <taxon>Gammaproteobacteria</taxon>
        <taxon>Enterobacterales</taxon>
        <taxon>Enterobacteriaceae</taxon>
        <taxon>Salmonella</taxon>
    </lineage>
</organism>
<accession>B5R282</accession>
<protein>
    <recommendedName>
        <fullName evidence="1">Small ribosomal subunit protein uS17</fullName>
    </recommendedName>
    <alternativeName>
        <fullName evidence="2">30S ribosomal protein S17</fullName>
    </alternativeName>
</protein>